<name>PCKA_BACTN</name>
<dbReference type="EC" id="4.1.1.49" evidence="1"/>
<dbReference type="EMBL" id="AE015928">
    <property type="protein sequence ID" value="AAO77896.1"/>
    <property type="molecule type" value="Genomic_DNA"/>
</dbReference>
<dbReference type="RefSeq" id="NP_811702.1">
    <property type="nucleotide sequence ID" value="NC_004663.1"/>
</dbReference>
<dbReference type="RefSeq" id="WP_008761973.1">
    <property type="nucleotide sequence ID" value="NZ_UYXG01000001.1"/>
</dbReference>
<dbReference type="SMR" id="Q8A414"/>
<dbReference type="FunCoup" id="Q8A414">
    <property type="interactions" value="352"/>
</dbReference>
<dbReference type="STRING" id="226186.BT_2790"/>
<dbReference type="PaxDb" id="226186-BT_2790"/>
<dbReference type="EnsemblBacteria" id="AAO77896">
    <property type="protein sequence ID" value="AAO77896"/>
    <property type="gene ID" value="BT_2790"/>
</dbReference>
<dbReference type="GeneID" id="60923969"/>
<dbReference type="KEGG" id="bth:BT_2790"/>
<dbReference type="PATRIC" id="fig|226186.12.peg.2837"/>
<dbReference type="eggNOG" id="COG1866">
    <property type="taxonomic scope" value="Bacteria"/>
</dbReference>
<dbReference type="HOGENOM" id="CLU_018247_0_1_10"/>
<dbReference type="InParanoid" id="Q8A414"/>
<dbReference type="OrthoDB" id="9806325at2"/>
<dbReference type="UniPathway" id="UPA00138"/>
<dbReference type="Proteomes" id="UP000001414">
    <property type="component" value="Chromosome"/>
</dbReference>
<dbReference type="GO" id="GO:0005829">
    <property type="term" value="C:cytosol"/>
    <property type="evidence" value="ECO:0000318"/>
    <property type="project" value="GO_Central"/>
</dbReference>
<dbReference type="GO" id="GO:0005524">
    <property type="term" value="F:ATP binding"/>
    <property type="evidence" value="ECO:0007669"/>
    <property type="project" value="UniProtKB-UniRule"/>
</dbReference>
<dbReference type="GO" id="GO:0046872">
    <property type="term" value="F:metal ion binding"/>
    <property type="evidence" value="ECO:0007669"/>
    <property type="project" value="UniProtKB-KW"/>
</dbReference>
<dbReference type="GO" id="GO:0004612">
    <property type="term" value="F:phosphoenolpyruvate carboxykinase (ATP) activity"/>
    <property type="evidence" value="ECO:0000318"/>
    <property type="project" value="GO_Central"/>
</dbReference>
<dbReference type="GO" id="GO:0006094">
    <property type="term" value="P:gluconeogenesis"/>
    <property type="evidence" value="ECO:0000318"/>
    <property type="project" value="GO_Central"/>
</dbReference>
<dbReference type="CDD" id="cd00484">
    <property type="entry name" value="PEPCK_ATP"/>
    <property type="match status" value="1"/>
</dbReference>
<dbReference type="FunFam" id="3.40.449.10:FF:000001">
    <property type="entry name" value="Phosphoenolpyruvate carboxykinase (ATP)"/>
    <property type="match status" value="1"/>
</dbReference>
<dbReference type="Gene3D" id="3.90.228.20">
    <property type="match status" value="1"/>
</dbReference>
<dbReference type="Gene3D" id="3.40.449.10">
    <property type="entry name" value="Phosphoenolpyruvate Carboxykinase, domain 1"/>
    <property type="match status" value="1"/>
</dbReference>
<dbReference type="Gene3D" id="2.170.8.10">
    <property type="entry name" value="Phosphoenolpyruvate Carboxykinase, domain 2"/>
    <property type="match status" value="1"/>
</dbReference>
<dbReference type="HAMAP" id="MF_00453">
    <property type="entry name" value="PEPCK_ATP"/>
    <property type="match status" value="1"/>
</dbReference>
<dbReference type="InterPro" id="IPR001272">
    <property type="entry name" value="PEP_carboxykinase_ATP"/>
</dbReference>
<dbReference type="InterPro" id="IPR013035">
    <property type="entry name" value="PEP_carboxykinase_C"/>
</dbReference>
<dbReference type="InterPro" id="IPR008210">
    <property type="entry name" value="PEP_carboxykinase_N"/>
</dbReference>
<dbReference type="InterPro" id="IPR015994">
    <property type="entry name" value="PEPCK_ATP_CS"/>
</dbReference>
<dbReference type="NCBIfam" id="TIGR00224">
    <property type="entry name" value="pckA"/>
    <property type="match status" value="1"/>
</dbReference>
<dbReference type="NCBIfam" id="NF006819">
    <property type="entry name" value="PRK09344.1-1"/>
    <property type="match status" value="1"/>
</dbReference>
<dbReference type="NCBIfam" id="NF006820">
    <property type="entry name" value="PRK09344.1-2"/>
    <property type="match status" value="1"/>
</dbReference>
<dbReference type="NCBIfam" id="NF006821">
    <property type="entry name" value="PRK09344.1-3"/>
    <property type="match status" value="1"/>
</dbReference>
<dbReference type="PANTHER" id="PTHR30031:SF0">
    <property type="entry name" value="PHOSPHOENOLPYRUVATE CARBOXYKINASE (ATP)"/>
    <property type="match status" value="1"/>
</dbReference>
<dbReference type="PANTHER" id="PTHR30031">
    <property type="entry name" value="PHOSPHOENOLPYRUVATE CARBOXYKINASE ATP"/>
    <property type="match status" value="1"/>
</dbReference>
<dbReference type="Pfam" id="PF01293">
    <property type="entry name" value="PEPCK_ATP"/>
    <property type="match status" value="1"/>
</dbReference>
<dbReference type="PIRSF" id="PIRSF006294">
    <property type="entry name" value="PEP_crbxkin"/>
    <property type="match status" value="1"/>
</dbReference>
<dbReference type="SUPFAM" id="SSF68923">
    <property type="entry name" value="PEP carboxykinase N-terminal domain"/>
    <property type="match status" value="1"/>
</dbReference>
<dbReference type="SUPFAM" id="SSF53795">
    <property type="entry name" value="PEP carboxykinase-like"/>
    <property type="match status" value="1"/>
</dbReference>
<dbReference type="PROSITE" id="PS00532">
    <property type="entry name" value="PEPCK_ATP"/>
    <property type="match status" value="1"/>
</dbReference>
<proteinExistence type="inferred from homology"/>
<reference key="1">
    <citation type="journal article" date="2003" name="Science">
        <title>A genomic view of the human-Bacteroides thetaiotaomicron symbiosis.</title>
        <authorList>
            <person name="Xu J."/>
            <person name="Bjursell M.K."/>
            <person name="Himrod J."/>
            <person name="Deng S."/>
            <person name="Carmichael L.K."/>
            <person name="Chiang H.C."/>
            <person name="Hooper L.V."/>
            <person name="Gordon J.I."/>
        </authorList>
    </citation>
    <scope>NUCLEOTIDE SEQUENCE [LARGE SCALE GENOMIC DNA]</scope>
    <source>
        <strain>ATCC 29148 / DSM 2079 / JCM 5827 / CCUG 10774 / NCTC 10582 / VPI-5482 / E50</strain>
    </source>
</reference>
<accession>Q8A414</accession>
<keyword id="KW-0067">ATP-binding</keyword>
<keyword id="KW-0963">Cytoplasm</keyword>
<keyword id="KW-0210">Decarboxylase</keyword>
<keyword id="KW-0312">Gluconeogenesis</keyword>
<keyword id="KW-0456">Lyase</keyword>
<keyword id="KW-0464">Manganese</keyword>
<keyword id="KW-0479">Metal-binding</keyword>
<keyword id="KW-0547">Nucleotide-binding</keyword>
<keyword id="KW-1185">Reference proteome</keyword>
<evidence type="ECO:0000255" key="1">
    <source>
        <dbReference type="HAMAP-Rule" id="MF_00453"/>
    </source>
</evidence>
<protein>
    <recommendedName>
        <fullName evidence="1">Phosphoenolpyruvate carboxykinase (ATP)</fullName>
        <shortName evidence="1">PCK</shortName>
        <shortName evidence="1">PEP carboxykinase</shortName>
        <shortName evidence="1">PEPCK</shortName>
        <ecNumber evidence="1">4.1.1.49</ecNumber>
    </recommendedName>
</protein>
<organism>
    <name type="scientific">Bacteroides thetaiotaomicron (strain ATCC 29148 / DSM 2079 / JCM 5827 / CCUG 10774 / NCTC 10582 / VPI-5482 / E50)</name>
    <dbReference type="NCBI Taxonomy" id="226186"/>
    <lineage>
        <taxon>Bacteria</taxon>
        <taxon>Pseudomonadati</taxon>
        <taxon>Bacteroidota</taxon>
        <taxon>Bacteroidia</taxon>
        <taxon>Bacteroidales</taxon>
        <taxon>Bacteroidaceae</taxon>
        <taxon>Bacteroides</taxon>
    </lineage>
</organism>
<gene>
    <name evidence="1" type="primary">pckA</name>
    <name type="ordered locus">BT_2790</name>
</gene>
<comment type="function">
    <text evidence="1">Involved in the gluconeogenesis. Catalyzes the conversion of oxaloacetate (OAA) to phosphoenolpyruvate (PEP) through direct phosphoryl transfer between the nucleoside triphosphate and OAA.</text>
</comment>
<comment type="catalytic activity">
    <reaction evidence="1">
        <text>oxaloacetate + ATP = phosphoenolpyruvate + ADP + CO2</text>
        <dbReference type="Rhea" id="RHEA:18617"/>
        <dbReference type="ChEBI" id="CHEBI:16452"/>
        <dbReference type="ChEBI" id="CHEBI:16526"/>
        <dbReference type="ChEBI" id="CHEBI:30616"/>
        <dbReference type="ChEBI" id="CHEBI:58702"/>
        <dbReference type="ChEBI" id="CHEBI:456216"/>
        <dbReference type="EC" id="4.1.1.49"/>
    </reaction>
</comment>
<comment type="cofactor">
    <cofactor evidence="1">
        <name>Mn(2+)</name>
        <dbReference type="ChEBI" id="CHEBI:29035"/>
    </cofactor>
    <text evidence="1">Binds 1 Mn(2+) ion per subunit.</text>
</comment>
<comment type="pathway">
    <text evidence="1">Carbohydrate biosynthesis; gluconeogenesis.</text>
</comment>
<comment type="subcellular location">
    <subcellularLocation>
        <location evidence="1">Cytoplasm</location>
    </subcellularLocation>
</comment>
<comment type="similarity">
    <text evidence="1">Belongs to the phosphoenolpyruvate carboxykinase (ATP) family.</text>
</comment>
<sequence length="535" mass="59163">MANLDLSKYGITGVTEIVHNPSYDVLFAEETKPGLEGFEKGQVTNMGAVNVMTGVYTGRSPKDKFFVKDETSENTVWWTSEEYKNDNKPVDAKCWAAVKDLATKELSNKRLFVVDAFCGANENSRLKLRFIMEVAWQAHFVTNMFIRPTAEELANFGEPDFVIMNASKAKVENYKELGLNSETAVVFNLTEKIQVILNTWYGGEMKKGMFSYMNYLLPLNGMASMHCSANTDKEGKSSAIFFGLSGTGKTTLSTDPKRLLIGDDEHGWDDEGVFNFEGGCYAKVINLDKESEPDIWNAIKRDALLENCTVNAEGEINFADKSVTENTRVSYPIYHIENIVKPVSKGPHAKQVIFLSADAFGVLPPVSILNAEQTKYYFLSGFTAKLAGTERGITEPTPTFSACFGAAFLSLHPTKYGEELVKKMEKTGAKAYLVNTGWNGTGKRISIKDTRGIIDAILDGSIDKAPTKVMPYFDFVVPTELPGVDPKILDPRDTYECACQWEEKAKDLAGRFIKNFAKFTGNEAGKALVAAGPKL</sequence>
<feature type="chain" id="PRO_0000203811" description="Phosphoenolpyruvate carboxykinase (ATP)">
    <location>
        <begin position="1"/>
        <end position="535"/>
    </location>
</feature>
<feature type="binding site" evidence="1">
    <location>
        <position position="59"/>
    </location>
    <ligand>
        <name>substrate</name>
    </ligand>
</feature>
<feature type="binding site" evidence="1">
    <location>
        <position position="201"/>
    </location>
    <ligand>
        <name>substrate</name>
    </ligand>
</feature>
<feature type="binding site" evidence="1">
    <location>
        <position position="207"/>
    </location>
    <ligand>
        <name>ATP</name>
        <dbReference type="ChEBI" id="CHEBI:30616"/>
    </ligand>
</feature>
<feature type="binding site" evidence="1">
    <location>
        <position position="207"/>
    </location>
    <ligand>
        <name>Mn(2+)</name>
        <dbReference type="ChEBI" id="CHEBI:29035"/>
    </ligand>
</feature>
<feature type="binding site" evidence="1">
    <location>
        <position position="207"/>
    </location>
    <ligand>
        <name>substrate</name>
    </ligand>
</feature>
<feature type="binding site" evidence="1">
    <location>
        <position position="226"/>
    </location>
    <ligand>
        <name>ATP</name>
        <dbReference type="ChEBI" id="CHEBI:30616"/>
    </ligand>
</feature>
<feature type="binding site" evidence="1">
    <location>
        <position position="226"/>
    </location>
    <ligand>
        <name>Mn(2+)</name>
        <dbReference type="ChEBI" id="CHEBI:29035"/>
    </ligand>
</feature>
<feature type="binding site" evidence="1">
    <location>
        <begin position="243"/>
        <end position="251"/>
    </location>
    <ligand>
        <name>ATP</name>
        <dbReference type="ChEBI" id="CHEBI:30616"/>
    </ligand>
</feature>
<feature type="binding site" evidence="1">
    <location>
        <position position="264"/>
    </location>
    <ligand>
        <name>Mn(2+)</name>
        <dbReference type="ChEBI" id="CHEBI:29035"/>
    </ligand>
</feature>
<feature type="binding site" evidence="1">
    <location>
        <position position="292"/>
    </location>
    <ligand>
        <name>ATP</name>
        <dbReference type="ChEBI" id="CHEBI:30616"/>
    </ligand>
</feature>
<feature type="binding site" evidence="1">
    <location>
        <position position="328"/>
    </location>
    <ligand>
        <name>ATP</name>
        <dbReference type="ChEBI" id="CHEBI:30616"/>
    </ligand>
</feature>
<feature type="binding site" evidence="1">
    <location>
        <position position="328"/>
    </location>
    <ligand>
        <name>substrate</name>
    </ligand>
</feature>
<feature type="binding site" evidence="1">
    <location>
        <begin position="444"/>
        <end position="445"/>
    </location>
    <ligand>
        <name>ATP</name>
        <dbReference type="ChEBI" id="CHEBI:30616"/>
    </ligand>
</feature>
<feature type="binding site" evidence="1">
    <location>
        <position position="450"/>
    </location>
    <ligand>
        <name>ATP</name>
        <dbReference type="ChEBI" id="CHEBI:30616"/>
    </ligand>
</feature>